<organism>
    <name type="scientific">Pongo abelii</name>
    <name type="common">Sumatran orangutan</name>
    <name type="synonym">Pongo pygmaeus abelii</name>
    <dbReference type="NCBI Taxonomy" id="9601"/>
    <lineage>
        <taxon>Eukaryota</taxon>
        <taxon>Metazoa</taxon>
        <taxon>Chordata</taxon>
        <taxon>Craniata</taxon>
        <taxon>Vertebrata</taxon>
        <taxon>Euteleostomi</taxon>
        <taxon>Mammalia</taxon>
        <taxon>Eutheria</taxon>
        <taxon>Euarchontoglires</taxon>
        <taxon>Primates</taxon>
        <taxon>Haplorrhini</taxon>
        <taxon>Catarrhini</taxon>
        <taxon>Hominidae</taxon>
        <taxon>Pongo</taxon>
    </lineage>
</organism>
<sequence>MLLRRVVEGGWAVAAAARGSGAHRFSSPDCCQRLPGGGSFLQRHHPGAQAPDGRRKFGTDHVEVGSQAGADGTRPPKASLPSGGPSEPQYPLPPELQPPTNCCMSGCPNCVWVEYADRLLQHFQDGGERALAALEEHVADENLKAFLRMEIQLHTRCGG</sequence>
<feature type="chain" id="PRO_0000314125" description="Oxidoreductase-like domain-containing protein 1">
    <location>
        <begin position="1"/>
        <end position="159"/>
    </location>
</feature>
<feature type="domain" description="Oxidoreductase-like">
    <location>
        <begin position="91"/>
        <end position="120"/>
    </location>
</feature>
<feature type="region of interest" description="Disordered" evidence="1">
    <location>
        <begin position="36"/>
        <end position="91"/>
    </location>
</feature>
<feature type="compositionally biased region" description="Basic and acidic residues" evidence="1">
    <location>
        <begin position="52"/>
        <end position="63"/>
    </location>
</feature>
<accession>Q5R7Q6</accession>
<dbReference type="EMBL" id="CR860056">
    <property type="protein sequence ID" value="CAH92204.1"/>
    <property type="molecule type" value="mRNA"/>
</dbReference>
<dbReference type="RefSeq" id="NP_001126289.1">
    <property type="nucleotide sequence ID" value="NM_001132817.1"/>
</dbReference>
<dbReference type="FunCoup" id="Q5R7Q6">
    <property type="interactions" value="155"/>
</dbReference>
<dbReference type="STRING" id="9601.ENSPPYP00000009810"/>
<dbReference type="GeneID" id="100173264"/>
<dbReference type="KEGG" id="pon:100173264"/>
<dbReference type="CTD" id="339231"/>
<dbReference type="eggNOG" id="ENOG502S74Z">
    <property type="taxonomic scope" value="Eukaryota"/>
</dbReference>
<dbReference type="InParanoid" id="Q5R7Q6"/>
<dbReference type="OrthoDB" id="10064411at2759"/>
<dbReference type="Proteomes" id="UP000001595">
    <property type="component" value="Unplaced"/>
</dbReference>
<dbReference type="GO" id="GO:0005739">
    <property type="term" value="C:mitochondrion"/>
    <property type="evidence" value="ECO:0007669"/>
    <property type="project" value="TreeGrafter"/>
</dbReference>
<dbReference type="InterPro" id="IPR019180">
    <property type="entry name" value="Oxidoreductase-like_N"/>
</dbReference>
<dbReference type="InterPro" id="IPR039251">
    <property type="entry name" value="OXLD1"/>
</dbReference>
<dbReference type="PANTHER" id="PTHR21193">
    <property type="entry name" value="OXIDOREDUCTASE-LIKE DOMAIN-CONTAINING PROTEIN 1"/>
    <property type="match status" value="1"/>
</dbReference>
<dbReference type="PANTHER" id="PTHR21193:SF3">
    <property type="entry name" value="OXIDOREDUCTASE-LIKE DOMAIN-CONTAINING PROTEIN 1"/>
    <property type="match status" value="1"/>
</dbReference>
<dbReference type="Pfam" id="PF09791">
    <property type="entry name" value="Oxidored-like"/>
    <property type="match status" value="1"/>
</dbReference>
<evidence type="ECO:0000256" key="1">
    <source>
        <dbReference type="SAM" id="MobiDB-lite"/>
    </source>
</evidence>
<name>OXLD1_PONAB</name>
<protein>
    <recommendedName>
        <fullName>Oxidoreductase-like domain-containing protein 1</fullName>
    </recommendedName>
</protein>
<reference key="1">
    <citation type="submission" date="2004-11" db="EMBL/GenBank/DDBJ databases">
        <authorList>
            <consortium name="The German cDNA consortium"/>
        </authorList>
    </citation>
    <scope>NUCLEOTIDE SEQUENCE [LARGE SCALE MRNA]</scope>
    <source>
        <tissue>Kidney</tissue>
    </source>
</reference>
<proteinExistence type="evidence at transcript level"/>
<keyword id="KW-1185">Reference proteome</keyword>
<gene>
    <name type="primary">OXLD1</name>
</gene>